<comment type="function">
    <text evidence="1">Might take part in the signal recognition particle (SRP) pathway. This is inferred from the conservation of its genetic proximity to ftsY/ffh. May be a regulatory protein (By similarity).</text>
</comment>
<comment type="similarity">
    <text evidence="2">Belongs to the UPF0122 family.</text>
</comment>
<protein>
    <recommendedName>
        <fullName>UPF0122 protein CA_C1753</fullName>
    </recommendedName>
</protein>
<reference key="1">
    <citation type="journal article" date="2001" name="J. Bacteriol.">
        <title>Genome sequence and comparative analysis of the solvent-producing bacterium Clostridium acetobutylicum.</title>
        <authorList>
            <person name="Noelling J."/>
            <person name="Breton G."/>
            <person name="Omelchenko M.V."/>
            <person name="Makarova K.S."/>
            <person name="Zeng Q."/>
            <person name="Gibson R."/>
            <person name="Lee H.M."/>
            <person name="Dubois J."/>
            <person name="Qiu D."/>
            <person name="Hitti J."/>
            <person name="Wolf Y.I."/>
            <person name="Tatusov R.L."/>
            <person name="Sabathe F."/>
            <person name="Doucette-Stamm L.A."/>
            <person name="Soucaille P."/>
            <person name="Daly M.J."/>
            <person name="Bennett G.N."/>
            <person name="Koonin E.V."/>
            <person name="Smith D.R."/>
        </authorList>
    </citation>
    <scope>NUCLEOTIDE SEQUENCE [LARGE SCALE GENOMIC DNA]</scope>
    <source>
        <strain>ATCC 824 / DSM 792 / JCM 1419 / IAM 19013 / LMG 5710 / NBRC 13948 / NRRL B-527 / VKM B-1787 / 2291 / W</strain>
    </source>
</reference>
<feature type="chain" id="PRO_0000211862" description="UPF0122 protein CA_C1753">
    <location>
        <begin position="1"/>
        <end position="116"/>
    </location>
</feature>
<evidence type="ECO:0000250" key="1"/>
<evidence type="ECO:0000305" key="2"/>
<organism>
    <name type="scientific">Clostridium acetobutylicum (strain ATCC 824 / DSM 792 / JCM 1419 / IAM 19013 / LMG 5710 / NBRC 13948 / NRRL B-527 / VKM B-1787 / 2291 / W)</name>
    <dbReference type="NCBI Taxonomy" id="272562"/>
    <lineage>
        <taxon>Bacteria</taxon>
        <taxon>Bacillati</taxon>
        <taxon>Bacillota</taxon>
        <taxon>Clostridia</taxon>
        <taxon>Eubacteriales</taxon>
        <taxon>Clostridiaceae</taxon>
        <taxon>Clostridium</taxon>
    </lineage>
</organism>
<sequence>MEERIYLSMLLSTYGSLLTEKQVNVMRLYYDDDLSMPEIAELNNTTRQAIHDLIKRCHKMLLNYENKLKLVEKYKRNEDIKKDIKDKLYILKDKIQDKDNVQLIDEIEKDINSFSI</sequence>
<accession>Q97I99</accession>
<name>Y1753_CLOAB</name>
<keyword id="KW-1185">Reference proteome</keyword>
<dbReference type="EMBL" id="AE001437">
    <property type="protein sequence ID" value="AAK79719.1"/>
    <property type="molecule type" value="Genomic_DNA"/>
</dbReference>
<dbReference type="PIR" id="D97116">
    <property type="entry name" value="D97116"/>
</dbReference>
<dbReference type="RefSeq" id="NP_348379.1">
    <property type="nucleotide sequence ID" value="NC_003030.1"/>
</dbReference>
<dbReference type="RefSeq" id="WP_010965060.1">
    <property type="nucleotide sequence ID" value="NC_003030.1"/>
</dbReference>
<dbReference type="SMR" id="Q97I99"/>
<dbReference type="STRING" id="272562.CA_C1753"/>
<dbReference type="KEGG" id="cac:CA_C1753"/>
<dbReference type="PATRIC" id="fig|272562.8.peg.1957"/>
<dbReference type="eggNOG" id="COG2739">
    <property type="taxonomic scope" value="Bacteria"/>
</dbReference>
<dbReference type="HOGENOM" id="CLU_129218_0_0_9"/>
<dbReference type="OrthoDB" id="6392at2"/>
<dbReference type="Proteomes" id="UP000000814">
    <property type="component" value="Chromosome"/>
</dbReference>
<dbReference type="Gene3D" id="1.10.10.10">
    <property type="entry name" value="Winged helix-like DNA-binding domain superfamily/Winged helix DNA-binding domain"/>
    <property type="match status" value="1"/>
</dbReference>
<dbReference type="HAMAP" id="MF_00245">
    <property type="entry name" value="UPF0122"/>
    <property type="match status" value="1"/>
</dbReference>
<dbReference type="InterPro" id="IPR013324">
    <property type="entry name" value="RNA_pol_sigma_r3/r4-like"/>
</dbReference>
<dbReference type="InterPro" id="IPR007394">
    <property type="entry name" value="UPF0122"/>
</dbReference>
<dbReference type="InterPro" id="IPR054831">
    <property type="entry name" value="UPF0122_fam_protein"/>
</dbReference>
<dbReference type="InterPro" id="IPR036388">
    <property type="entry name" value="WH-like_DNA-bd_sf"/>
</dbReference>
<dbReference type="NCBIfam" id="NF001072">
    <property type="entry name" value="PRK00118.2-2"/>
    <property type="match status" value="1"/>
</dbReference>
<dbReference type="NCBIfam" id="NF045758">
    <property type="entry name" value="YlxM"/>
    <property type="match status" value="1"/>
</dbReference>
<dbReference type="PANTHER" id="PTHR40083">
    <property type="entry name" value="UPF0122 PROTEIN CBO2450/CLC_2298"/>
    <property type="match status" value="1"/>
</dbReference>
<dbReference type="PANTHER" id="PTHR40083:SF1">
    <property type="entry name" value="UPF0122 PROTEIN YLXM"/>
    <property type="match status" value="1"/>
</dbReference>
<dbReference type="Pfam" id="PF04297">
    <property type="entry name" value="UPF0122"/>
    <property type="match status" value="1"/>
</dbReference>
<dbReference type="SUPFAM" id="SSF88659">
    <property type="entry name" value="Sigma3 and sigma4 domains of RNA polymerase sigma factors"/>
    <property type="match status" value="1"/>
</dbReference>
<proteinExistence type="inferred from homology"/>
<gene>
    <name type="ordered locus">CA_C1753</name>
</gene>